<reference key="1">
    <citation type="submission" date="2004-12" db="EMBL/GenBank/DDBJ databases">
        <title>The genome sequence of Borrelia hermsii and Borrelia turicatae: comparative analysis of two agents of endemic N. America relapsing fever.</title>
        <authorList>
            <person name="Porcella S.F."/>
            <person name="Raffel S.J."/>
            <person name="Schrumpf M.E."/>
            <person name="Montgomery B."/>
            <person name="Smith T."/>
            <person name="Schwan T.G."/>
        </authorList>
    </citation>
    <scope>NUCLEOTIDE SEQUENCE [LARGE SCALE GENOMIC DNA]</scope>
    <source>
        <strain>91E135</strain>
    </source>
</reference>
<dbReference type="EMBL" id="CP000049">
    <property type="protein sequence ID" value="AAX17935.1"/>
    <property type="molecule type" value="Genomic_DNA"/>
</dbReference>
<dbReference type="RefSeq" id="WP_011772553.1">
    <property type="nucleotide sequence ID" value="NC_008710.1"/>
</dbReference>
<dbReference type="SMR" id="A1R043"/>
<dbReference type="KEGG" id="btu:BT0615"/>
<dbReference type="eggNOG" id="COG0522">
    <property type="taxonomic scope" value="Bacteria"/>
</dbReference>
<dbReference type="HOGENOM" id="CLU_092403_0_4_12"/>
<dbReference type="Proteomes" id="UP000001205">
    <property type="component" value="Chromosome"/>
</dbReference>
<dbReference type="GO" id="GO:0015935">
    <property type="term" value="C:small ribosomal subunit"/>
    <property type="evidence" value="ECO:0007669"/>
    <property type="project" value="InterPro"/>
</dbReference>
<dbReference type="GO" id="GO:0019843">
    <property type="term" value="F:rRNA binding"/>
    <property type="evidence" value="ECO:0007669"/>
    <property type="project" value="UniProtKB-UniRule"/>
</dbReference>
<dbReference type="GO" id="GO:0003735">
    <property type="term" value="F:structural constituent of ribosome"/>
    <property type="evidence" value="ECO:0007669"/>
    <property type="project" value="InterPro"/>
</dbReference>
<dbReference type="GO" id="GO:0042274">
    <property type="term" value="P:ribosomal small subunit biogenesis"/>
    <property type="evidence" value="ECO:0007669"/>
    <property type="project" value="TreeGrafter"/>
</dbReference>
<dbReference type="GO" id="GO:0006412">
    <property type="term" value="P:translation"/>
    <property type="evidence" value="ECO:0007669"/>
    <property type="project" value="UniProtKB-UniRule"/>
</dbReference>
<dbReference type="CDD" id="cd00165">
    <property type="entry name" value="S4"/>
    <property type="match status" value="1"/>
</dbReference>
<dbReference type="FunFam" id="3.10.290.10:FF:000001">
    <property type="entry name" value="30S ribosomal protein S4"/>
    <property type="match status" value="1"/>
</dbReference>
<dbReference type="Gene3D" id="1.10.1050.10">
    <property type="entry name" value="Ribosomal Protein S4 Delta 41, Chain A, domain 1"/>
    <property type="match status" value="1"/>
</dbReference>
<dbReference type="Gene3D" id="3.10.290.10">
    <property type="entry name" value="RNA-binding S4 domain"/>
    <property type="match status" value="1"/>
</dbReference>
<dbReference type="HAMAP" id="MF_01306_B">
    <property type="entry name" value="Ribosomal_uS4_B"/>
    <property type="match status" value="1"/>
</dbReference>
<dbReference type="InterPro" id="IPR022801">
    <property type="entry name" value="Ribosomal_uS4"/>
</dbReference>
<dbReference type="InterPro" id="IPR005709">
    <property type="entry name" value="Ribosomal_uS4_bac-type"/>
</dbReference>
<dbReference type="InterPro" id="IPR018079">
    <property type="entry name" value="Ribosomal_uS4_CS"/>
</dbReference>
<dbReference type="InterPro" id="IPR001912">
    <property type="entry name" value="Ribosomal_uS4_N"/>
</dbReference>
<dbReference type="InterPro" id="IPR002942">
    <property type="entry name" value="S4_RNA-bd"/>
</dbReference>
<dbReference type="InterPro" id="IPR036986">
    <property type="entry name" value="S4_RNA-bd_sf"/>
</dbReference>
<dbReference type="NCBIfam" id="NF003717">
    <property type="entry name" value="PRK05327.1"/>
    <property type="match status" value="1"/>
</dbReference>
<dbReference type="NCBIfam" id="TIGR01017">
    <property type="entry name" value="rpsD_bact"/>
    <property type="match status" value="1"/>
</dbReference>
<dbReference type="PANTHER" id="PTHR11831">
    <property type="entry name" value="30S 40S RIBOSOMAL PROTEIN"/>
    <property type="match status" value="1"/>
</dbReference>
<dbReference type="PANTHER" id="PTHR11831:SF4">
    <property type="entry name" value="SMALL RIBOSOMAL SUBUNIT PROTEIN US4M"/>
    <property type="match status" value="1"/>
</dbReference>
<dbReference type="Pfam" id="PF00163">
    <property type="entry name" value="Ribosomal_S4"/>
    <property type="match status" value="1"/>
</dbReference>
<dbReference type="Pfam" id="PF01479">
    <property type="entry name" value="S4"/>
    <property type="match status" value="1"/>
</dbReference>
<dbReference type="SMART" id="SM01390">
    <property type="entry name" value="Ribosomal_S4"/>
    <property type="match status" value="1"/>
</dbReference>
<dbReference type="SMART" id="SM00363">
    <property type="entry name" value="S4"/>
    <property type="match status" value="1"/>
</dbReference>
<dbReference type="SUPFAM" id="SSF55174">
    <property type="entry name" value="Alpha-L RNA-binding motif"/>
    <property type="match status" value="1"/>
</dbReference>
<dbReference type="PROSITE" id="PS00632">
    <property type="entry name" value="RIBOSOMAL_S4"/>
    <property type="match status" value="1"/>
</dbReference>
<dbReference type="PROSITE" id="PS50889">
    <property type="entry name" value="S4"/>
    <property type="match status" value="1"/>
</dbReference>
<sequence>MNRKNIAKGKLVRRFGVNIFEQPKYDKLLKKKPNAPGMHGRSRRAKITEYGKQLIEKQKVKFTYGVSERQLTNIFKESRRQHGVTGDNLLALLERRIDNVVYRAGFAISRAHARQIVSHGIIMLNGRRVTIPSITLRANDMIQVKEKDRLKKLVRSNIEKTSTLRKLPTWIEVNADDLNVKITRPPSRDEIPTLANEQMIVEYYSKRA</sequence>
<proteinExistence type="inferred from homology"/>
<evidence type="ECO:0000255" key="1">
    <source>
        <dbReference type="HAMAP-Rule" id="MF_01306"/>
    </source>
</evidence>
<evidence type="ECO:0000305" key="2"/>
<name>RS4_BORT9</name>
<keyword id="KW-1185">Reference proteome</keyword>
<keyword id="KW-0687">Ribonucleoprotein</keyword>
<keyword id="KW-0689">Ribosomal protein</keyword>
<keyword id="KW-0694">RNA-binding</keyword>
<keyword id="KW-0699">rRNA-binding</keyword>
<gene>
    <name evidence="1" type="primary">rpsD</name>
    <name type="ordered locus">BT0615</name>
</gene>
<organism>
    <name type="scientific">Borrelia turicatae (strain 91E135)</name>
    <dbReference type="NCBI Taxonomy" id="314724"/>
    <lineage>
        <taxon>Bacteria</taxon>
        <taxon>Pseudomonadati</taxon>
        <taxon>Spirochaetota</taxon>
        <taxon>Spirochaetia</taxon>
        <taxon>Spirochaetales</taxon>
        <taxon>Borreliaceae</taxon>
        <taxon>Borrelia</taxon>
    </lineage>
</organism>
<feature type="chain" id="PRO_1000165385" description="Small ribosomal subunit protein uS4">
    <location>
        <begin position="1"/>
        <end position="208"/>
    </location>
</feature>
<feature type="domain" description="S4 RNA-binding" evidence="1">
    <location>
        <begin position="95"/>
        <end position="157"/>
    </location>
</feature>
<comment type="function">
    <text evidence="1">One of the primary rRNA binding proteins, it binds directly to 16S rRNA where it nucleates assembly of the body of the 30S subunit.</text>
</comment>
<comment type="function">
    <text evidence="1">With S5 and S12 plays an important role in translational accuracy.</text>
</comment>
<comment type="subunit">
    <text evidence="1">Part of the 30S ribosomal subunit. Contacts protein S5. The interaction surface between S4 and S5 is involved in control of translational fidelity.</text>
</comment>
<comment type="similarity">
    <text evidence="1">Belongs to the universal ribosomal protein uS4 family.</text>
</comment>
<protein>
    <recommendedName>
        <fullName evidence="1">Small ribosomal subunit protein uS4</fullName>
    </recommendedName>
    <alternativeName>
        <fullName evidence="2">30S ribosomal protein S4</fullName>
    </alternativeName>
</protein>
<accession>A1R043</accession>